<feature type="chain" id="PRO_1000139889" description="HPr kinase/phosphorylase">
    <location>
        <begin position="1"/>
        <end position="308"/>
    </location>
</feature>
<feature type="region of interest" description="Important for the catalytic mechanism of both phosphorylation and dephosphorylation" evidence="1">
    <location>
        <begin position="201"/>
        <end position="210"/>
    </location>
</feature>
<feature type="region of interest" description="Important for the catalytic mechanism of dephosphorylation" evidence="1">
    <location>
        <begin position="264"/>
        <end position="269"/>
    </location>
</feature>
<feature type="active site" evidence="1">
    <location>
        <position position="138"/>
    </location>
</feature>
<feature type="active site" evidence="1">
    <location>
        <position position="159"/>
    </location>
</feature>
<feature type="active site" description="Proton acceptor; for phosphorylation activity. Proton donor; for dephosphorylation activity" evidence="1">
    <location>
        <position position="177"/>
    </location>
</feature>
<feature type="active site" evidence="1">
    <location>
        <position position="243"/>
    </location>
</feature>
<feature type="binding site" evidence="1">
    <location>
        <begin position="153"/>
        <end position="160"/>
    </location>
    <ligand>
        <name>ATP</name>
        <dbReference type="ChEBI" id="CHEBI:30616"/>
    </ligand>
</feature>
<feature type="binding site" evidence="1">
    <location>
        <position position="160"/>
    </location>
    <ligand>
        <name>Mg(2+)</name>
        <dbReference type="ChEBI" id="CHEBI:18420"/>
    </ligand>
</feature>
<feature type="binding site" evidence="1">
    <location>
        <position position="202"/>
    </location>
    <ligand>
        <name>Mg(2+)</name>
        <dbReference type="ChEBI" id="CHEBI:18420"/>
    </ligand>
</feature>
<dbReference type="EC" id="2.7.11.-" evidence="1"/>
<dbReference type="EC" id="2.7.4.-" evidence="1"/>
<dbReference type="EMBL" id="AM902716">
    <property type="protein sequence ID" value="CAP40778.1"/>
    <property type="molecule type" value="Genomic_DNA"/>
</dbReference>
<dbReference type="SMR" id="A9I0P4"/>
<dbReference type="STRING" id="94624.Bpet0446"/>
<dbReference type="KEGG" id="bpt:Bpet0446"/>
<dbReference type="eggNOG" id="COG1493">
    <property type="taxonomic scope" value="Bacteria"/>
</dbReference>
<dbReference type="Proteomes" id="UP000001225">
    <property type="component" value="Chromosome"/>
</dbReference>
<dbReference type="GO" id="GO:0005524">
    <property type="term" value="F:ATP binding"/>
    <property type="evidence" value="ECO:0007669"/>
    <property type="project" value="UniProtKB-UniRule"/>
</dbReference>
<dbReference type="GO" id="GO:0000287">
    <property type="term" value="F:magnesium ion binding"/>
    <property type="evidence" value="ECO:0007669"/>
    <property type="project" value="UniProtKB-UniRule"/>
</dbReference>
<dbReference type="GO" id="GO:0000155">
    <property type="term" value="F:phosphorelay sensor kinase activity"/>
    <property type="evidence" value="ECO:0007669"/>
    <property type="project" value="InterPro"/>
</dbReference>
<dbReference type="GO" id="GO:0004674">
    <property type="term" value="F:protein serine/threonine kinase activity"/>
    <property type="evidence" value="ECO:0007669"/>
    <property type="project" value="UniProtKB-KW"/>
</dbReference>
<dbReference type="GO" id="GO:0004712">
    <property type="term" value="F:protein serine/threonine/tyrosine kinase activity"/>
    <property type="evidence" value="ECO:0007669"/>
    <property type="project" value="UniProtKB-UniRule"/>
</dbReference>
<dbReference type="GO" id="GO:0006109">
    <property type="term" value="P:regulation of carbohydrate metabolic process"/>
    <property type="evidence" value="ECO:0007669"/>
    <property type="project" value="UniProtKB-UniRule"/>
</dbReference>
<dbReference type="CDD" id="cd01918">
    <property type="entry name" value="HprK_C"/>
    <property type="match status" value="1"/>
</dbReference>
<dbReference type="FunFam" id="3.40.50.300:FF:000174">
    <property type="entry name" value="HPr kinase/phosphorylase"/>
    <property type="match status" value="1"/>
</dbReference>
<dbReference type="Gene3D" id="3.40.1390.20">
    <property type="entry name" value="HprK N-terminal domain-like"/>
    <property type="match status" value="1"/>
</dbReference>
<dbReference type="Gene3D" id="3.40.50.300">
    <property type="entry name" value="P-loop containing nucleotide triphosphate hydrolases"/>
    <property type="match status" value="1"/>
</dbReference>
<dbReference type="HAMAP" id="MF_01249">
    <property type="entry name" value="HPr_kinase"/>
    <property type="match status" value="1"/>
</dbReference>
<dbReference type="InterPro" id="IPR003755">
    <property type="entry name" value="HPr(Ser)_kin/Pase"/>
</dbReference>
<dbReference type="InterPro" id="IPR011104">
    <property type="entry name" value="Hpr_kin/Pase_C"/>
</dbReference>
<dbReference type="InterPro" id="IPR011126">
    <property type="entry name" value="Hpr_kin/Pase_Hpr_N"/>
</dbReference>
<dbReference type="InterPro" id="IPR027417">
    <property type="entry name" value="P-loop_NTPase"/>
</dbReference>
<dbReference type="InterPro" id="IPR028979">
    <property type="entry name" value="Ser_kin/Pase_Hpr-like_N_sf"/>
</dbReference>
<dbReference type="NCBIfam" id="TIGR00679">
    <property type="entry name" value="hpr-ser"/>
    <property type="match status" value="1"/>
</dbReference>
<dbReference type="PANTHER" id="PTHR30305:SF1">
    <property type="entry name" value="HPR KINASE_PHOSPHORYLASE"/>
    <property type="match status" value="1"/>
</dbReference>
<dbReference type="PANTHER" id="PTHR30305">
    <property type="entry name" value="PROTEIN YJDM-RELATED"/>
    <property type="match status" value="1"/>
</dbReference>
<dbReference type="Pfam" id="PF07475">
    <property type="entry name" value="Hpr_kinase_C"/>
    <property type="match status" value="1"/>
</dbReference>
<dbReference type="Pfam" id="PF02603">
    <property type="entry name" value="Hpr_kinase_N"/>
    <property type="match status" value="1"/>
</dbReference>
<dbReference type="SUPFAM" id="SSF75138">
    <property type="entry name" value="HprK N-terminal domain-like"/>
    <property type="match status" value="1"/>
</dbReference>
<dbReference type="SUPFAM" id="SSF53795">
    <property type="entry name" value="PEP carboxykinase-like"/>
    <property type="match status" value="1"/>
</dbReference>
<reference key="1">
    <citation type="journal article" date="2008" name="BMC Genomics">
        <title>The missing link: Bordetella petrii is endowed with both the metabolic versatility of environmental bacteria and virulence traits of pathogenic Bordetellae.</title>
        <authorList>
            <person name="Gross R."/>
            <person name="Guzman C.A."/>
            <person name="Sebaihia M."/>
            <person name="Martin dos Santos V.A.P."/>
            <person name="Pieper D.H."/>
            <person name="Koebnik R."/>
            <person name="Lechner M."/>
            <person name="Bartels D."/>
            <person name="Buhrmester J."/>
            <person name="Choudhuri J.V."/>
            <person name="Ebensen T."/>
            <person name="Gaigalat L."/>
            <person name="Herrmann S."/>
            <person name="Khachane A.N."/>
            <person name="Larisch C."/>
            <person name="Link S."/>
            <person name="Linke B."/>
            <person name="Meyer F."/>
            <person name="Mormann S."/>
            <person name="Nakunst D."/>
            <person name="Rueckert C."/>
            <person name="Schneiker-Bekel S."/>
            <person name="Schulze K."/>
            <person name="Voerholter F.-J."/>
            <person name="Yevsa T."/>
            <person name="Engle J.T."/>
            <person name="Goldman W.E."/>
            <person name="Puehler A."/>
            <person name="Goebel U.B."/>
            <person name="Goesmann A."/>
            <person name="Bloecker H."/>
            <person name="Kaiser O."/>
            <person name="Martinez-Arias R."/>
        </authorList>
    </citation>
    <scope>NUCLEOTIDE SEQUENCE [LARGE SCALE GENOMIC DNA]</scope>
    <source>
        <strain>ATCC BAA-461 / DSM 12804 / CCUG 43448</strain>
    </source>
</reference>
<keyword id="KW-0067">ATP-binding</keyword>
<keyword id="KW-0418">Kinase</keyword>
<keyword id="KW-0460">Magnesium</keyword>
<keyword id="KW-0479">Metal-binding</keyword>
<keyword id="KW-0511">Multifunctional enzyme</keyword>
<keyword id="KW-0547">Nucleotide-binding</keyword>
<keyword id="KW-0723">Serine/threonine-protein kinase</keyword>
<keyword id="KW-0808">Transferase</keyword>
<proteinExistence type="inferred from homology"/>
<organism>
    <name type="scientific">Bordetella petrii (strain ATCC BAA-461 / DSM 12804 / CCUG 43448)</name>
    <dbReference type="NCBI Taxonomy" id="340100"/>
    <lineage>
        <taxon>Bacteria</taxon>
        <taxon>Pseudomonadati</taxon>
        <taxon>Pseudomonadota</taxon>
        <taxon>Betaproteobacteria</taxon>
        <taxon>Burkholderiales</taxon>
        <taxon>Alcaligenaceae</taxon>
        <taxon>Bordetella</taxon>
    </lineage>
</organism>
<evidence type="ECO:0000255" key="1">
    <source>
        <dbReference type="HAMAP-Rule" id="MF_01249"/>
    </source>
</evidence>
<name>HPRK_BORPD</name>
<gene>
    <name evidence="1" type="primary">hprK</name>
    <name type="ordered locus">Bpet0446</name>
</gene>
<sequence length="308" mass="33842">MLTVQELVDDNADNIPFNWIAGHGAAERNIRDDGMAAADLVGHLNLIHPSRIQVFGQEELAYYSRFDLRRRTHHMDELLIGGVPAILLADGLSPPQDLIDQCDQHQVPLLSTPVAAAQLIDLLRIYLGKKLAPTTTVHGVFMDVLGLGVLITGESGLGKSELALELISRGHGLVADDAVEFSRIAPGMIEGHCPPLLQNMLEVRGLGLLDIRTIFGETSVRRKMRLKLIVHLVRATAQDKFERLPLQDITQDMLGMPVRKVMLQVAAGRNLAVLVEAAVRNTILKLRGIDTLGEFMERQAMAILQSSK</sequence>
<comment type="function">
    <text evidence="1">Catalyzes the ATP- as well as the pyrophosphate-dependent phosphorylation of a specific serine residue in HPr, a phosphocarrier protein of the phosphoenolpyruvate-dependent sugar phosphotransferase system (PTS). HprK/P also catalyzes the pyrophosphate-producing, inorganic phosphate-dependent dephosphorylation (phosphorolysis) of seryl-phosphorylated HPr (P-Ser-HPr).</text>
</comment>
<comment type="catalytic activity">
    <reaction evidence="1">
        <text>[HPr protein]-L-serine + ATP = [HPr protein]-O-phospho-L-serine + ADP + H(+)</text>
        <dbReference type="Rhea" id="RHEA:46600"/>
        <dbReference type="Rhea" id="RHEA-COMP:11602"/>
        <dbReference type="Rhea" id="RHEA-COMP:11603"/>
        <dbReference type="ChEBI" id="CHEBI:15378"/>
        <dbReference type="ChEBI" id="CHEBI:29999"/>
        <dbReference type="ChEBI" id="CHEBI:30616"/>
        <dbReference type="ChEBI" id="CHEBI:83421"/>
        <dbReference type="ChEBI" id="CHEBI:456216"/>
    </reaction>
</comment>
<comment type="catalytic activity">
    <reaction evidence="1">
        <text>[HPr protein]-O-phospho-L-serine + phosphate + H(+) = [HPr protein]-L-serine + diphosphate</text>
        <dbReference type="Rhea" id="RHEA:46604"/>
        <dbReference type="Rhea" id="RHEA-COMP:11602"/>
        <dbReference type="Rhea" id="RHEA-COMP:11603"/>
        <dbReference type="ChEBI" id="CHEBI:15378"/>
        <dbReference type="ChEBI" id="CHEBI:29999"/>
        <dbReference type="ChEBI" id="CHEBI:33019"/>
        <dbReference type="ChEBI" id="CHEBI:43474"/>
        <dbReference type="ChEBI" id="CHEBI:83421"/>
    </reaction>
</comment>
<comment type="cofactor">
    <cofactor evidence="1">
        <name>Mg(2+)</name>
        <dbReference type="ChEBI" id="CHEBI:18420"/>
    </cofactor>
</comment>
<comment type="subunit">
    <text evidence="1">Homohexamer.</text>
</comment>
<comment type="domain">
    <text evidence="1">The Walker A ATP-binding motif also binds Pi and PPi.</text>
</comment>
<comment type="miscellaneous">
    <text evidence="1">Both phosphorylation and phosphorolysis are carried out by the same active site and suggest a common mechanism for both reactions.</text>
</comment>
<comment type="similarity">
    <text evidence="1">Belongs to the HPrK/P family.</text>
</comment>
<protein>
    <recommendedName>
        <fullName evidence="1">HPr kinase/phosphorylase</fullName>
        <shortName evidence="1">HPrK/P</shortName>
        <ecNumber evidence="1">2.7.11.-</ecNumber>
        <ecNumber evidence="1">2.7.4.-</ecNumber>
    </recommendedName>
    <alternativeName>
        <fullName evidence="1">HPr(Ser) kinase/phosphorylase</fullName>
    </alternativeName>
</protein>
<accession>A9I0P4</accession>